<protein>
    <recommendedName>
        <fullName evidence="1">Hydroxyethylthiazole kinase</fullName>
        <ecNumber evidence="1">2.7.1.50</ecNumber>
    </recommendedName>
    <alternativeName>
        <fullName evidence="1">4-methyl-5-beta-hydroxyethylthiazole kinase</fullName>
        <shortName evidence="1">TH kinase</shortName>
        <shortName evidence="1">Thz kinase</shortName>
    </alternativeName>
</protein>
<comment type="function">
    <text evidence="1">Catalyzes the phosphorylation of the hydroxyl group of 4-methyl-5-beta-hydroxyethylthiazole (THZ).</text>
</comment>
<comment type="catalytic activity">
    <reaction evidence="1">
        <text>5-(2-hydroxyethyl)-4-methylthiazole + ATP = 4-methyl-5-(2-phosphooxyethyl)-thiazole + ADP + H(+)</text>
        <dbReference type="Rhea" id="RHEA:24212"/>
        <dbReference type="ChEBI" id="CHEBI:15378"/>
        <dbReference type="ChEBI" id="CHEBI:17957"/>
        <dbReference type="ChEBI" id="CHEBI:30616"/>
        <dbReference type="ChEBI" id="CHEBI:58296"/>
        <dbReference type="ChEBI" id="CHEBI:456216"/>
        <dbReference type="EC" id="2.7.1.50"/>
    </reaction>
</comment>
<comment type="cofactor">
    <cofactor evidence="1">
        <name>Mg(2+)</name>
        <dbReference type="ChEBI" id="CHEBI:18420"/>
    </cofactor>
</comment>
<comment type="pathway">
    <text evidence="1">Cofactor biosynthesis; thiamine diphosphate biosynthesis; 4-methyl-5-(2-phosphoethyl)-thiazole from 5-(2-hydroxyethyl)-4-methylthiazole: step 1/1.</text>
</comment>
<comment type="similarity">
    <text evidence="1">Belongs to the Thz kinase family.</text>
</comment>
<sequence length="262" mass="27339">MQVDLLGSAQSAHALHLFHQHSPLVHCMTNDVVQTFTANTLLALGASPAMVIETEEASQFAAIASALLINVGTLTQPRAQAMRAAVEQAKSSQTPWTLDPVAVGALDYRRHFCHELLSFKPAAIRGNASEIMALAGIANGGRGVDTTDAAANAIPAAQTLARETGAIVVVTGEMDYVTDGHRIIGIHGGDPLMTKVVGTGCALSAVVAACCALPGDTLENVASACHWMKQAGERAVARSEGPGSFVPHFLDALWQLTQEVQA</sequence>
<evidence type="ECO:0000255" key="1">
    <source>
        <dbReference type="HAMAP-Rule" id="MF_00228"/>
    </source>
</evidence>
<proteinExistence type="inferred from homology"/>
<accession>B1IYX7</accession>
<dbReference type="EC" id="2.7.1.50" evidence="1"/>
<dbReference type="EMBL" id="CP000946">
    <property type="protein sequence ID" value="ACA77203.1"/>
    <property type="molecule type" value="Genomic_DNA"/>
</dbReference>
<dbReference type="RefSeq" id="WP_001195564.1">
    <property type="nucleotide sequence ID" value="NZ_MTFT01000031.1"/>
</dbReference>
<dbReference type="SMR" id="B1IYX7"/>
<dbReference type="KEGG" id="ecl:EcolC_1543"/>
<dbReference type="HOGENOM" id="CLU_019943_0_1_6"/>
<dbReference type="UniPathway" id="UPA00060">
    <property type="reaction ID" value="UER00139"/>
</dbReference>
<dbReference type="GO" id="GO:0005524">
    <property type="term" value="F:ATP binding"/>
    <property type="evidence" value="ECO:0007669"/>
    <property type="project" value="UniProtKB-UniRule"/>
</dbReference>
<dbReference type="GO" id="GO:0004417">
    <property type="term" value="F:hydroxyethylthiazole kinase activity"/>
    <property type="evidence" value="ECO:0007669"/>
    <property type="project" value="UniProtKB-UniRule"/>
</dbReference>
<dbReference type="GO" id="GO:0000287">
    <property type="term" value="F:magnesium ion binding"/>
    <property type="evidence" value="ECO:0007669"/>
    <property type="project" value="UniProtKB-UniRule"/>
</dbReference>
<dbReference type="GO" id="GO:0009228">
    <property type="term" value="P:thiamine biosynthetic process"/>
    <property type="evidence" value="ECO:0007669"/>
    <property type="project" value="UniProtKB-KW"/>
</dbReference>
<dbReference type="GO" id="GO:0009229">
    <property type="term" value="P:thiamine diphosphate biosynthetic process"/>
    <property type="evidence" value="ECO:0007669"/>
    <property type="project" value="UniProtKB-UniRule"/>
</dbReference>
<dbReference type="CDD" id="cd01170">
    <property type="entry name" value="THZ_kinase"/>
    <property type="match status" value="1"/>
</dbReference>
<dbReference type="FunFam" id="3.40.1190.20:FF:000015">
    <property type="entry name" value="Hydroxyethylthiazole kinase"/>
    <property type="match status" value="1"/>
</dbReference>
<dbReference type="Gene3D" id="3.40.1190.20">
    <property type="match status" value="1"/>
</dbReference>
<dbReference type="HAMAP" id="MF_00228">
    <property type="entry name" value="Thz_kinase"/>
    <property type="match status" value="1"/>
</dbReference>
<dbReference type="InterPro" id="IPR000417">
    <property type="entry name" value="Hyethyz_kinase"/>
</dbReference>
<dbReference type="InterPro" id="IPR029056">
    <property type="entry name" value="Ribokinase-like"/>
</dbReference>
<dbReference type="NCBIfam" id="NF006830">
    <property type="entry name" value="PRK09355.1"/>
    <property type="match status" value="1"/>
</dbReference>
<dbReference type="NCBIfam" id="TIGR00694">
    <property type="entry name" value="thiM"/>
    <property type="match status" value="1"/>
</dbReference>
<dbReference type="Pfam" id="PF02110">
    <property type="entry name" value="HK"/>
    <property type="match status" value="1"/>
</dbReference>
<dbReference type="PIRSF" id="PIRSF000513">
    <property type="entry name" value="Thz_kinase"/>
    <property type="match status" value="1"/>
</dbReference>
<dbReference type="PRINTS" id="PR01099">
    <property type="entry name" value="HYETHTZKNASE"/>
</dbReference>
<dbReference type="SUPFAM" id="SSF53613">
    <property type="entry name" value="Ribokinase-like"/>
    <property type="match status" value="1"/>
</dbReference>
<name>THIM_ECOLC</name>
<gene>
    <name evidence="1" type="primary">thiM</name>
    <name type="ordered locus">EcolC_1543</name>
</gene>
<feature type="chain" id="PRO_1000078216" description="Hydroxyethylthiazole kinase">
    <location>
        <begin position="1"/>
        <end position="262"/>
    </location>
</feature>
<feature type="binding site" evidence="1">
    <location>
        <position position="50"/>
    </location>
    <ligand>
        <name>substrate</name>
    </ligand>
</feature>
<feature type="binding site" evidence="1">
    <location>
        <position position="125"/>
    </location>
    <ligand>
        <name>ATP</name>
        <dbReference type="ChEBI" id="CHEBI:30616"/>
    </ligand>
</feature>
<feature type="binding site" evidence="1">
    <location>
        <position position="171"/>
    </location>
    <ligand>
        <name>ATP</name>
        <dbReference type="ChEBI" id="CHEBI:30616"/>
    </ligand>
</feature>
<feature type="binding site" evidence="1">
    <location>
        <position position="198"/>
    </location>
    <ligand>
        <name>substrate</name>
    </ligand>
</feature>
<keyword id="KW-0067">ATP-binding</keyword>
<keyword id="KW-0418">Kinase</keyword>
<keyword id="KW-0460">Magnesium</keyword>
<keyword id="KW-0479">Metal-binding</keyword>
<keyword id="KW-0547">Nucleotide-binding</keyword>
<keyword id="KW-0784">Thiamine biosynthesis</keyword>
<keyword id="KW-0808">Transferase</keyword>
<reference key="1">
    <citation type="submission" date="2008-02" db="EMBL/GenBank/DDBJ databases">
        <title>Complete sequence of Escherichia coli C str. ATCC 8739.</title>
        <authorList>
            <person name="Copeland A."/>
            <person name="Lucas S."/>
            <person name="Lapidus A."/>
            <person name="Glavina del Rio T."/>
            <person name="Dalin E."/>
            <person name="Tice H."/>
            <person name="Bruce D."/>
            <person name="Goodwin L."/>
            <person name="Pitluck S."/>
            <person name="Kiss H."/>
            <person name="Brettin T."/>
            <person name="Detter J.C."/>
            <person name="Han C."/>
            <person name="Kuske C.R."/>
            <person name="Schmutz J."/>
            <person name="Larimer F."/>
            <person name="Land M."/>
            <person name="Hauser L."/>
            <person name="Kyrpides N."/>
            <person name="Mikhailova N."/>
            <person name="Ingram L."/>
            <person name="Richardson P."/>
        </authorList>
    </citation>
    <scope>NUCLEOTIDE SEQUENCE [LARGE SCALE GENOMIC DNA]</scope>
    <source>
        <strain>ATCC 8739 / DSM 1576 / NBRC 3972 / NCIMB 8545 / WDCM 00012 / Crooks</strain>
    </source>
</reference>
<organism>
    <name type="scientific">Escherichia coli (strain ATCC 8739 / DSM 1576 / NBRC 3972 / NCIMB 8545 / WDCM 00012 / Crooks)</name>
    <dbReference type="NCBI Taxonomy" id="481805"/>
    <lineage>
        <taxon>Bacteria</taxon>
        <taxon>Pseudomonadati</taxon>
        <taxon>Pseudomonadota</taxon>
        <taxon>Gammaproteobacteria</taxon>
        <taxon>Enterobacterales</taxon>
        <taxon>Enterobacteriaceae</taxon>
        <taxon>Escherichia</taxon>
    </lineage>
</organism>